<accession>A8LE67</accession>
<dbReference type="EC" id="6.1.1.3" evidence="1"/>
<dbReference type="EMBL" id="CP000820">
    <property type="protein sequence ID" value="ABW11202.1"/>
    <property type="molecule type" value="Genomic_DNA"/>
</dbReference>
<dbReference type="RefSeq" id="WP_020459373.1">
    <property type="nucleotide sequence ID" value="NC_009921.1"/>
</dbReference>
<dbReference type="SMR" id="A8LE67"/>
<dbReference type="STRING" id="298653.Franean1_1764"/>
<dbReference type="KEGG" id="fre:Franean1_1764"/>
<dbReference type="eggNOG" id="COG0441">
    <property type="taxonomic scope" value="Bacteria"/>
</dbReference>
<dbReference type="HOGENOM" id="CLU_008554_0_1_11"/>
<dbReference type="GO" id="GO:0005737">
    <property type="term" value="C:cytoplasm"/>
    <property type="evidence" value="ECO:0007669"/>
    <property type="project" value="UniProtKB-SubCell"/>
</dbReference>
<dbReference type="GO" id="GO:0005524">
    <property type="term" value="F:ATP binding"/>
    <property type="evidence" value="ECO:0007669"/>
    <property type="project" value="UniProtKB-UniRule"/>
</dbReference>
<dbReference type="GO" id="GO:0046872">
    <property type="term" value="F:metal ion binding"/>
    <property type="evidence" value="ECO:0007669"/>
    <property type="project" value="UniProtKB-KW"/>
</dbReference>
<dbReference type="GO" id="GO:0004829">
    <property type="term" value="F:threonine-tRNA ligase activity"/>
    <property type="evidence" value="ECO:0007669"/>
    <property type="project" value="UniProtKB-UniRule"/>
</dbReference>
<dbReference type="GO" id="GO:0000049">
    <property type="term" value="F:tRNA binding"/>
    <property type="evidence" value="ECO:0007669"/>
    <property type="project" value="UniProtKB-KW"/>
</dbReference>
<dbReference type="GO" id="GO:0006435">
    <property type="term" value="P:threonyl-tRNA aminoacylation"/>
    <property type="evidence" value="ECO:0007669"/>
    <property type="project" value="UniProtKB-UniRule"/>
</dbReference>
<dbReference type="CDD" id="cd00860">
    <property type="entry name" value="ThrRS_anticodon"/>
    <property type="match status" value="1"/>
</dbReference>
<dbReference type="CDD" id="cd00771">
    <property type="entry name" value="ThrRS_core"/>
    <property type="match status" value="1"/>
</dbReference>
<dbReference type="FunFam" id="3.30.54.20:FF:000003">
    <property type="entry name" value="Threonine--tRNA ligase"/>
    <property type="match status" value="1"/>
</dbReference>
<dbReference type="FunFam" id="3.30.930.10:FF:000019">
    <property type="entry name" value="Threonine--tRNA ligase"/>
    <property type="match status" value="1"/>
</dbReference>
<dbReference type="FunFam" id="3.40.50.800:FF:000001">
    <property type="entry name" value="Threonine--tRNA ligase"/>
    <property type="match status" value="1"/>
</dbReference>
<dbReference type="Gene3D" id="3.30.54.20">
    <property type="match status" value="1"/>
</dbReference>
<dbReference type="Gene3D" id="3.40.50.800">
    <property type="entry name" value="Anticodon-binding domain"/>
    <property type="match status" value="1"/>
</dbReference>
<dbReference type="Gene3D" id="3.30.930.10">
    <property type="entry name" value="Bira Bifunctional Protein, Domain 2"/>
    <property type="match status" value="1"/>
</dbReference>
<dbReference type="Gene3D" id="3.30.980.10">
    <property type="entry name" value="Threonyl-trna Synthetase, Chain A, domain 2"/>
    <property type="match status" value="1"/>
</dbReference>
<dbReference type="HAMAP" id="MF_00184">
    <property type="entry name" value="Thr_tRNA_synth"/>
    <property type="match status" value="1"/>
</dbReference>
<dbReference type="InterPro" id="IPR002314">
    <property type="entry name" value="aa-tRNA-synt_IIb"/>
</dbReference>
<dbReference type="InterPro" id="IPR006195">
    <property type="entry name" value="aa-tRNA-synth_II"/>
</dbReference>
<dbReference type="InterPro" id="IPR045864">
    <property type="entry name" value="aa-tRNA-synth_II/BPL/LPL"/>
</dbReference>
<dbReference type="InterPro" id="IPR004154">
    <property type="entry name" value="Anticodon-bd"/>
</dbReference>
<dbReference type="InterPro" id="IPR036621">
    <property type="entry name" value="Anticodon-bd_dom_sf"/>
</dbReference>
<dbReference type="InterPro" id="IPR004095">
    <property type="entry name" value="TGS"/>
</dbReference>
<dbReference type="InterPro" id="IPR002320">
    <property type="entry name" value="Thr-tRNA-ligase_IIa"/>
</dbReference>
<dbReference type="InterPro" id="IPR018163">
    <property type="entry name" value="Thr/Ala-tRNA-synth_IIc_edit"/>
</dbReference>
<dbReference type="InterPro" id="IPR047246">
    <property type="entry name" value="ThrRS_anticodon"/>
</dbReference>
<dbReference type="InterPro" id="IPR033728">
    <property type="entry name" value="ThrRS_core"/>
</dbReference>
<dbReference type="InterPro" id="IPR012947">
    <property type="entry name" value="tRNA_SAD"/>
</dbReference>
<dbReference type="NCBIfam" id="TIGR00418">
    <property type="entry name" value="thrS"/>
    <property type="match status" value="1"/>
</dbReference>
<dbReference type="PANTHER" id="PTHR11451:SF44">
    <property type="entry name" value="THREONINE--TRNA LIGASE, CHLOROPLASTIC_MITOCHONDRIAL 2"/>
    <property type="match status" value="1"/>
</dbReference>
<dbReference type="PANTHER" id="PTHR11451">
    <property type="entry name" value="THREONINE-TRNA LIGASE"/>
    <property type="match status" value="1"/>
</dbReference>
<dbReference type="Pfam" id="PF03129">
    <property type="entry name" value="HGTP_anticodon"/>
    <property type="match status" value="1"/>
</dbReference>
<dbReference type="Pfam" id="PF00587">
    <property type="entry name" value="tRNA-synt_2b"/>
    <property type="match status" value="1"/>
</dbReference>
<dbReference type="Pfam" id="PF07973">
    <property type="entry name" value="tRNA_SAD"/>
    <property type="match status" value="1"/>
</dbReference>
<dbReference type="PRINTS" id="PR01047">
    <property type="entry name" value="TRNASYNTHTHR"/>
</dbReference>
<dbReference type="SMART" id="SM00863">
    <property type="entry name" value="tRNA_SAD"/>
    <property type="match status" value="1"/>
</dbReference>
<dbReference type="SUPFAM" id="SSF52954">
    <property type="entry name" value="Class II aaRS ABD-related"/>
    <property type="match status" value="1"/>
</dbReference>
<dbReference type="SUPFAM" id="SSF55681">
    <property type="entry name" value="Class II aaRS and biotin synthetases"/>
    <property type="match status" value="1"/>
</dbReference>
<dbReference type="SUPFAM" id="SSF55186">
    <property type="entry name" value="ThrRS/AlaRS common domain"/>
    <property type="match status" value="1"/>
</dbReference>
<dbReference type="PROSITE" id="PS50862">
    <property type="entry name" value="AA_TRNA_LIGASE_II"/>
    <property type="match status" value="1"/>
</dbReference>
<dbReference type="PROSITE" id="PS51880">
    <property type="entry name" value="TGS"/>
    <property type="match status" value="1"/>
</dbReference>
<evidence type="ECO:0000255" key="1">
    <source>
        <dbReference type="HAMAP-Rule" id="MF_00184"/>
    </source>
</evidence>
<evidence type="ECO:0000255" key="2">
    <source>
        <dbReference type="PROSITE-ProRule" id="PRU01228"/>
    </source>
</evidence>
<protein>
    <recommendedName>
        <fullName evidence="1">Threonine--tRNA ligase</fullName>
        <ecNumber evidence="1">6.1.1.3</ecNumber>
    </recommendedName>
    <alternativeName>
        <fullName evidence="1">Threonyl-tRNA synthetase</fullName>
        <shortName evidence="1">ThrRS</shortName>
    </alternativeName>
</protein>
<gene>
    <name evidence="1" type="primary">thrS</name>
    <name type="ordered locus">Franean1_1764</name>
</gene>
<reference key="1">
    <citation type="journal article" date="2007" name="Genome Res.">
        <title>Genome characteristics of facultatively symbiotic Frankia sp. strains reflect host range and host plant biogeography.</title>
        <authorList>
            <person name="Normand P."/>
            <person name="Lapierre P."/>
            <person name="Tisa L.S."/>
            <person name="Gogarten J.P."/>
            <person name="Alloisio N."/>
            <person name="Bagnarol E."/>
            <person name="Bassi C.A."/>
            <person name="Berry A.M."/>
            <person name="Bickhart D.M."/>
            <person name="Choisne N."/>
            <person name="Couloux A."/>
            <person name="Cournoyer B."/>
            <person name="Cruveiller S."/>
            <person name="Daubin V."/>
            <person name="Demange N."/>
            <person name="Francino M.P."/>
            <person name="Goltsman E."/>
            <person name="Huang Y."/>
            <person name="Kopp O.R."/>
            <person name="Labarre L."/>
            <person name="Lapidus A."/>
            <person name="Lavire C."/>
            <person name="Marechal J."/>
            <person name="Martinez M."/>
            <person name="Mastronunzio J.E."/>
            <person name="Mullin B.C."/>
            <person name="Niemann J."/>
            <person name="Pujic P."/>
            <person name="Rawnsley T."/>
            <person name="Rouy Z."/>
            <person name="Schenowitz C."/>
            <person name="Sellstedt A."/>
            <person name="Tavares F."/>
            <person name="Tomkins J.P."/>
            <person name="Vallenet D."/>
            <person name="Valverde C."/>
            <person name="Wall L.G."/>
            <person name="Wang Y."/>
            <person name="Medigue C."/>
            <person name="Benson D.R."/>
        </authorList>
    </citation>
    <scope>NUCLEOTIDE SEQUENCE [LARGE SCALE GENOMIC DNA]</scope>
    <source>
        <strain>EAN1pec</strain>
    </source>
</reference>
<comment type="function">
    <text evidence="1">Catalyzes the attachment of threonine to tRNA(Thr) in a two-step reaction: L-threonine is first activated by ATP to form Thr-AMP and then transferred to the acceptor end of tRNA(Thr). Also edits incorrectly charged L-seryl-tRNA(Thr).</text>
</comment>
<comment type="catalytic activity">
    <reaction evidence="1">
        <text>tRNA(Thr) + L-threonine + ATP = L-threonyl-tRNA(Thr) + AMP + diphosphate + H(+)</text>
        <dbReference type="Rhea" id="RHEA:24624"/>
        <dbReference type="Rhea" id="RHEA-COMP:9670"/>
        <dbReference type="Rhea" id="RHEA-COMP:9704"/>
        <dbReference type="ChEBI" id="CHEBI:15378"/>
        <dbReference type="ChEBI" id="CHEBI:30616"/>
        <dbReference type="ChEBI" id="CHEBI:33019"/>
        <dbReference type="ChEBI" id="CHEBI:57926"/>
        <dbReference type="ChEBI" id="CHEBI:78442"/>
        <dbReference type="ChEBI" id="CHEBI:78534"/>
        <dbReference type="ChEBI" id="CHEBI:456215"/>
        <dbReference type="EC" id="6.1.1.3"/>
    </reaction>
</comment>
<comment type="cofactor">
    <cofactor evidence="1">
        <name>Zn(2+)</name>
        <dbReference type="ChEBI" id="CHEBI:29105"/>
    </cofactor>
    <text evidence="1">Binds 1 zinc ion per subunit.</text>
</comment>
<comment type="subunit">
    <text evidence="1">Homodimer.</text>
</comment>
<comment type="subcellular location">
    <subcellularLocation>
        <location evidence="1">Cytoplasm</location>
    </subcellularLocation>
</comment>
<comment type="similarity">
    <text evidence="1">Belongs to the class-II aminoacyl-tRNA synthetase family.</text>
</comment>
<proteinExistence type="inferred from homology"/>
<organism>
    <name type="scientific">Parafrankia sp. (strain EAN1pec)</name>
    <dbReference type="NCBI Taxonomy" id="298653"/>
    <lineage>
        <taxon>Bacteria</taxon>
        <taxon>Bacillati</taxon>
        <taxon>Actinomycetota</taxon>
        <taxon>Actinomycetes</taxon>
        <taxon>Frankiales</taxon>
        <taxon>Frankiaceae</taxon>
        <taxon>Parafrankia</taxon>
    </lineage>
</organism>
<name>SYT_PARS2</name>
<keyword id="KW-0030">Aminoacyl-tRNA synthetase</keyword>
<keyword id="KW-0067">ATP-binding</keyword>
<keyword id="KW-0963">Cytoplasm</keyword>
<keyword id="KW-0436">Ligase</keyword>
<keyword id="KW-0479">Metal-binding</keyword>
<keyword id="KW-0547">Nucleotide-binding</keyword>
<keyword id="KW-0648">Protein biosynthesis</keyword>
<keyword id="KW-0694">RNA-binding</keyword>
<keyword id="KW-0820">tRNA-binding</keyword>
<keyword id="KW-0862">Zinc</keyword>
<feature type="chain" id="PRO_1000098573" description="Threonine--tRNA ligase">
    <location>
        <begin position="1"/>
        <end position="658"/>
    </location>
</feature>
<feature type="domain" description="TGS" evidence="2">
    <location>
        <begin position="1"/>
        <end position="61"/>
    </location>
</feature>
<feature type="region of interest" description="Catalytic" evidence="1">
    <location>
        <begin position="259"/>
        <end position="554"/>
    </location>
</feature>
<feature type="binding site" evidence="1">
    <location>
        <position position="353"/>
    </location>
    <ligand>
        <name>Zn(2+)</name>
        <dbReference type="ChEBI" id="CHEBI:29105"/>
    </ligand>
</feature>
<feature type="binding site" evidence="1">
    <location>
        <position position="404"/>
    </location>
    <ligand>
        <name>Zn(2+)</name>
        <dbReference type="ChEBI" id="CHEBI:29105"/>
    </ligand>
</feature>
<feature type="binding site" evidence="1">
    <location>
        <position position="531"/>
    </location>
    <ligand>
        <name>Zn(2+)</name>
        <dbReference type="ChEBI" id="CHEBI:29105"/>
    </ligand>
</feature>
<sequence>MSDVRVTVQRGQQAEERVVRTGTTAAELFDGERSVIAARVGGLQRDLSHPLAAGDVVEPITVDSPDGRAIVRHSCAHVVAQAVQDLFPKARLGIGPPIQDGFYYDFDVERPFTPEDLKAVEKRAQEIIKAGQRFARRVVSEDEARAELADEPYKIELIGLKSSAGDDAEAGVEVGEGELTIYDNLDPKSGELCWKDLCRGPHVPTTRHIPAFAVQRSAAAYWRGSERNPQLQRIYGTAWESRDALKAYQHRLAEAEKRDHRRLGAELDLFSFPTEIGPGLAVFHPKGGAIRTVMEDYSRRRHIEAGYEFVNTPHITKSDLYEISGHLDWFADGMYPPMQLDGGADYYLKPMNCPMHILIFRSRGRSYRELPLRLFEFGTVYRYEKSGVVHGLTRVRGLTQDDAHLFCAREQLPTELDTVLKFVLGLLRDYGLEDFYLELSTRPPGKAIGSDKEWEEATELLREAASKQDLELVMDEGGGAFYGPKISVQARDAIGRTWQLSTIQVDFQLPQRFDMTYQAADGTRQRPFMIHRALFGTIERFFAILLEHYAGALPPWLAPVQVVGIPITDEHVPYLTDVAAKLRQRGIRVEVDSSDDRMQKKIRTAQKQKVPFMLLAGDEDVAKGAVSFRFRDGTQRNGVPVDEAVAEILDAVERRIQV</sequence>